<feature type="chain" id="PRO_0000321816" description="Adenylosuccinate synthetase">
    <location>
        <begin position="1"/>
        <end position="336"/>
    </location>
</feature>
<feature type="active site" description="Proton acceptor" evidence="1">
    <location>
        <position position="13"/>
    </location>
</feature>
<feature type="active site" description="Proton donor" evidence="1">
    <location>
        <position position="43"/>
    </location>
</feature>
<feature type="binding site" evidence="1">
    <location>
        <begin position="12"/>
        <end position="18"/>
    </location>
    <ligand>
        <name>GTP</name>
        <dbReference type="ChEBI" id="CHEBI:37565"/>
    </ligand>
</feature>
<feature type="binding site" description="in other chain" evidence="1">
    <location>
        <begin position="13"/>
        <end position="16"/>
    </location>
    <ligand>
        <name>IMP</name>
        <dbReference type="ChEBI" id="CHEBI:58053"/>
        <note>ligand shared between dimeric partners</note>
    </ligand>
</feature>
<feature type="binding site" evidence="1">
    <location>
        <position position="13"/>
    </location>
    <ligand>
        <name>Mg(2+)</name>
        <dbReference type="ChEBI" id="CHEBI:18420"/>
    </ligand>
</feature>
<feature type="binding site" description="in other chain" evidence="1">
    <location>
        <begin position="40"/>
        <end position="43"/>
    </location>
    <ligand>
        <name>IMP</name>
        <dbReference type="ChEBI" id="CHEBI:58053"/>
        <note>ligand shared between dimeric partners</note>
    </ligand>
</feature>
<feature type="binding site" evidence="1">
    <location>
        <begin position="42"/>
        <end position="44"/>
    </location>
    <ligand>
        <name>GTP</name>
        <dbReference type="ChEBI" id="CHEBI:37565"/>
    </ligand>
</feature>
<feature type="binding site" evidence="1">
    <location>
        <position position="42"/>
    </location>
    <ligand>
        <name>Mg(2+)</name>
        <dbReference type="ChEBI" id="CHEBI:18420"/>
    </ligand>
</feature>
<feature type="binding site" description="in other chain" evidence="1">
    <location>
        <position position="127"/>
    </location>
    <ligand>
        <name>IMP</name>
        <dbReference type="ChEBI" id="CHEBI:58053"/>
        <note>ligand shared between dimeric partners</note>
    </ligand>
</feature>
<feature type="binding site" evidence="1">
    <location>
        <position position="141"/>
    </location>
    <ligand>
        <name>IMP</name>
        <dbReference type="ChEBI" id="CHEBI:58053"/>
        <note>ligand shared between dimeric partners</note>
    </ligand>
</feature>
<feature type="binding site" description="in other chain" evidence="1">
    <location>
        <position position="179"/>
    </location>
    <ligand>
        <name>IMP</name>
        <dbReference type="ChEBI" id="CHEBI:58053"/>
        <note>ligand shared between dimeric partners</note>
    </ligand>
</feature>
<feature type="binding site" description="in other chain" evidence="1">
    <location>
        <position position="194"/>
    </location>
    <ligand>
        <name>IMP</name>
        <dbReference type="ChEBI" id="CHEBI:58053"/>
        <note>ligand shared between dimeric partners</note>
    </ligand>
</feature>
<feature type="binding site" evidence="1">
    <location>
        <begin position="252"/>
        <end position="258"/>
    </location>
    <ligand>
        <name>substrate</name>
    </ligand>
</feature>
<feature type="binding site" description="in other chain" evidence="1">
    <location>
        <position position="256"/>
    </location>
    <ligand>
        <name>IMP</name>
        <dbReference type="ChEBI" id="CHEBI:58053"/>
        <note>ligand shared between dimeric partners</note>
    </ligand>
</feature>
<feature type="binding site" evidence="1">
    <location>
        <position position="258"/>
    </location>
    <ligand>
        <name>GTP</name>
        <dbReference type="ChEBI" id="CHEBI:37565"/>
    </ligand>
</feature>
<feature type="binding site" evidence="1">
    <location>
        <begin position="284"/>
        <end position="286"/>
    </location>
    <ligand>
        <name>GTP</name>
        <dbReference type="ChEBI" id="CHEBI:37565"/>
    </ligand>
</feature>
<feature type="binding site" evidence="1">
    <location>
        <begin position="324"/>
        <end position="326"/>
    </location>
    <ligand>
        <name>GTP</name>
        <dbReference type="ChEBI" id="CHEBI:37565"/>
    </ligand>
</feature>
<dbReference type="EC" id="6.3.4.4" evidence="1"/>
<dbReference type="EMBL" id="CP000743">
    <property type="protein sequence ID" value="ABR55626.1"/>
    <property type="molecule type" value="Genomic_DNA"/>
</dbReference>
<dbReference type="RefSeq" id="WP_011972758.1">
    <property type="nucleotide sequence ID" value="NC_009635.1"/>
</dbReference>
<dbReference type="SMR" id="A6UT04"/>
<dbReference type="STRING" id="419665.Maeo_0033"/>
<dbReference type="GeneID" id="5326450"/>
<dbReference type="KEGG" id="mae:Maeo_0033"/>
<dbReference type="eggNOG" id="arCOG04387">
    <property type="taxonomic scope" value="Archaea"/>
</dbReference>
<dbReference type="HOGENOM" id="CLU_029848_0_0_2"/>
<dbReference type="OrthoDB" id="372247at2157"/>
<dbReference type="UniPathway" id="UPA00075">
    <property type="reaction ID" value="UER00335"/>
</dbReference>
<dbReference type="Proteomes" id="UP000001106">
    <property type="component" value="Chromosome"/>
</dbReference>
<dbReference type="GO" id="GO:0005737">
    <property type="term" value="C:cytoplasm"/>
    <property type="evidence" value="ECO:0007669"/>
    <property type="project" value="UniProtKB-SubCell"/>
</dbReference>
<dbReference type="GO" id="GO:0004019">
    <property type="term" value="F:adenylosuccinate synthase activity"/>
    <property type="evidence" value="ECO:0007669"/>
    <property type="project" value="UniProtKB-UniRule"/>
</dbReference>
<dbReference type="GO" id="GO:0005525">
    <property type="term" value="F:GTP binding"/>
    <property type="evidence" value="ECO:0007669"/>
    <property type="project" value="UniProtKB-UniRule"/>
</dbReference>
<dbReference type="GO" id="GO:0000287">
    <property type="term" value="F:magnesium ion binding"/>
    <property type="evidence" value="ECO:0007669"/>
    <property type="project" value="UniProtKB-UniRule"/>
</dbReference>
<dbReference type="GO" id="GO:0044208">
    <property type="term" value="P:'de novo' AMP biosynthetic process"/>
    <property type="evidence" value="ECO:0007669"/>
    <property type="project" value="UniProtKB-UniRule"/>
</dbReference>
<dbReference type="GO" id="GO:0046040">
    <property type="term" value="P:IMP metabolic process"/>
    <property type="evidence" value="ECO:0007669"/>
    <property type="project" value="TreeGrafter"/>
</dbReference>
<dbReference type="CDD" id="cd03108">
    <property type="entry name" value="AdSS"/>
    <property type="match status" value="1"/>
</dbReference>
<dbReference type="FunFam" id="3.40.440.10:FF:000007">
    <property type="entry name" value="Adenylosuccinate synthetase"/>
    <property type="match status" value="1"/>
</dbReference>
<dbReference type="Gene3D" id="3.40.440.10">
    <property type="entry name" value="Adenylosuccinate Synthetase, subunit A, domain 1"/>
    <property type="match status" value="2"/>
</dbReference>
<dbReference type="Gene3D" id="1.10.300.10">
    <property type="entry name" value="Adenylosuccinate Synthetase, subunit A, domain 2"/>
    <property type="match status" value="2"/>
</dbReference>
<dbReference type="Gene3D" id="3.90.170.10">
    <property type="entry name" value="Adenylosuccinate Synthetase, subunit A, domain 3"/>
    <property type="match status" value="2"/>
</dbReference>
<dbReference type="HAMAP" id="MF_00011">
    <property type="entry name" value="Adenylosucc_synth"/>
    <property type="match status" value="1"/>
</dbReference>
<dbReference type="InterPro" id="IPR018220">
    <property type="entry name" value="Adenylosuccin_syn_GTP-bd"/>
</dbReference>
<dbReference type="InterPro" id="IPR042109">
    <property type="entry name" value="Adenylosuccinate_synth_dom1"/>
</dbReference>
<dbReference type="InterPro" id="IPR042110">
    <property type="entry name" value="Adenylosuccinate_synth_dom2"/>
</dbReference>
<dbReference type="InterPro" id="IPR042111">
    <property type="entry name" value="Adenylosuccinate_synth_dom3"/>
</dbReference>
<dbReference type="InterPro" id="IPR001114">
    <property type="entry name" value="Adenylosuccinate_synthetase"/>
</dbReference>
<dbReference type="InterPro" id="IPR027417">
    <property type="entry name" value="P-loop_NTPase"/>
</dbReference>
<dbReference type="NCBIfam" id="NF003295">
    <property type="entry name" value="PRK04293.1"/>
    <property type="match status" value="1"/>
</dbReference>
<dbReference type="PANTHER" id="PTHR11846">
    <property type="entry name" value="ADENYLOSUCCINATE SYNTHETASE"/>
    <property type="match status" value="1"/>
</dbReference>
<dbReference type="PANTHER" id="PTHR11846:SF0">
    <property type="entry name" value="ADENYLOSUCCINATE SYNTHETASE"/>
    <property type="match status" value="1"/>
</dbReference>
<dbReference type="Pfam" id="PF00709">
    <property type="entry name" value="Adenylsucc_synt"/>
    <property type="match status" value="2"/>
</dbReference>
<dbReference type="SMART" id="SM00788">
    <property type="entry name" value="Adenylsucc_synt"/>
    <property type="match status" value="1"/>
</dbReference>
<dbReference type="SUPFAM" id="SSF52540">
    <property type="entry name" value="P-loop containing nucleoside triphosphate hydrolases"/>
    <property type="match status" value="1"/>
</dbReference>
<dbReference type="PROSITE" id="PS01266">
    <property type="entry name" value="ADENYLOSUCCIN_SYN_1"/>
    <property type="match status" value="1"/>
</dbReference>
<protein>
    <recommendedName>
        <fullName evidence="1">Adenylosuccinate synthetase</fullName>
        <shortName evidence="1">AMPSase</shortName>
        <shortName evidence="1">AdSS</shortName>
        <ecNumber evidence="1">6.3.4.4</ecNumber>
    </recommendedName>
    <alternativeName>
        <fullName evidence="1">IMP--aspartate ligase</fullName>
    </alternativeName>
</protein>
<accession>A6UT04</accession>
<comment type="function">
    <text evidence="1">Plays an important role in the de novo pathway of purine nucleotide biosynthesis. Catalyzes the first committed step in the biosynthesis of AMP from IMP.</text>
</comment>
<comment type="catalytic activity">
    <reaction evidence="1">
        <text>IMP + L-aspartate + GTP = N(6)-(1,2-dicarboxyethyl)-AMP + GDP + phosphate + 2 H(+)</text>
        <dbReference type="Rhea" id="RHEA:15753"/>
        <dbReference type="ChEBI" id="CHEBI:15378"/>
        <dbReference type="ChEBI" id="CHEBI:29991"/>
        <dbReference type="ChEBI" id="CHEBI:37565"/>
        <dbReference type="ChEBI" id="CHEBI:43474"/>
        <dbReference type="ChEBI" id="CHEBI:57567"/>
        <dbReference type="ChEBI" id="CHEBI:58053"/>
        <dbReference type="ChEBI" id="CHEBI:58189"/>
        <dbReference type="EC" id="6.3.4.4"/>
    </reaction>
</comment>
<comment type="cofactor">
    <cofactor evidence="1">
        <name>Mg(2+)</name>
        <dbReference type="ChEBI" id="CHEBI:18420"/>
    </cofactor>
    <text evidence="1">Binds 1 Mg(2+) ion per subunit.</text>
</comment>
<comment type="pathway">
    <text evidence="1">Purine metabolism; AMP biosynthesis via de novo pathway; AMP from IMP: step 1/2.</text>
</comment>
<comment type="subunit">
    <text evidence="1">Homodimer.</text>
</comment>
<comment type="subcellular location">
    <subcellularLocation>
        <location evidence="1">Cytoplasm</location>
    </subcellularLocation>
</comment>
<comment type="similarity">
    <text evidence="1">Belongs to the adenylosuccinate synthetase family.</text>
</comment>
<sequence>MTCTIVVGGQWGDEGKGKIISYICEKDKPSVVARGGVGPNAGHSVEVDGKKYGIRMVPTGFPNRSSKLAVGAGVLVDVDVLLKEVEMLKEFNIKDRVIIDYNCGVIEEKHKEMDKSNSHLSKEIGSTGTGCGPANVDRAMRTLRLAKEFDALKPFLGDVSDLVNEALENGENVLIEGTQGTLLSLYYGSYPYVTSNDTSASAFASDVGIGPTKVDEVIVVFKSYPTRVGEGPFPTEMDVEEAEKLGLVEYGTVTGRRRRIGYFDYDLAKKVCRLNGATAIALTCLDKYDEECHGLTNYDDITEKGLAFIKEIEEKVGVPVKIISTGPELHQTIDIR</sequence>
<organism>
    <name type="scientific">Methanococcus aeolicus (strain ATCC BAA-1280 / DSM 17508 / OCM 812 / Nankai-3)</name>
    <dbReference type="NCBI Taxonomy" id="419665"/>
    <lineage>
        <taxon>Archaea</taxon>
        <taxon>Methanobacteriati</taxon>
        <taxon>Methanobacteriota</taxon>
        <taxon>Methanomada group</taxon>
        <taxon>Methanococci</taxon>
        <taxon>Methanococcales</taxon>
        <taxon>Methanococcaceae</taxon>
        <taxon>Methanococcus</taxon>
    </lineage>
</organism>
<keyword id="KW-0963">Cytoplasm</keyword>
<keyword id="KW-0342">GTP-binding</keyword>
<keyword id="KW-0436">Ligase</keyword>
<keyword id="KW-0460">Magnesium</keyword>
<keyword id="KW-0479">Metal-binding</keyword>
<keyword id="KW-0547">Nucleotide-binding</keyword>
<keyword id="KW-0658">Purine biosynthesis</keyword>
<reference key="1">
    <citation type="submission" date="2007-06" db="EMBL/GenBank/DDBJ databases">
        <title>Complete sequence of Methanococcus aeolicus Nankai-3.</title>
        <authorList>
            <consortium name="US DOE Joint Genome Institute"/>
            <person name="Copeland A."/>
            <person name="Lucas S."/>
            <person name="Lapidus A."/>
            <person name="Barry K."/>
            <person name="Glavina del Rio T."/>
            <person name="Dalin E."/>
            <person name="Tice H."/>
            <person name="Pitluck S."/>
            <person name="Chain P."/>
            <person name="Malfatti S."/>
            <person name="Shin M."/>
            <person name="Vergez L."/>
            <person name="Schmutz J."/>
            <person name="Larimer F."/>
            <person name="Land M."/>
            <person name="Hauser L."/>
            <person name="Kyrpides N."/>
            <person name="Lykidis A."/>
            <person name="Sieprawska-Lupa M."/>
            <person name="Whitman W.B."/>
            <person name="Richardson P."/>
        </authorList>
    </citation>
    <scope>NUCLEOTIDE SEQUENCE [LARGE SCALE GENOMIC DNA]</scope>
    <source>
        <strain>ATCC BAA-1280 / DSM 17508 / OCM 812 / Nankai-3</strain>
    </source>
</reference>
<evidence type="ECO:0000255" key="1">
    <source>
        <dbReference type="HAMAP-Rule" id="MF_00011"/>
    </source>
</evidence>
<name>PURA_META3</name>
<proteinExistence type="inferred from homology"/>
<gene>
    <name evidence="1" type="primary">purA</name>
    <name type="ordered locus">Maeo_0033</name>
</gene>